<proteinExistence type="inferred from homology"/>
<keyword id="KW-0010">Activator</keyword>
<keyword id="KW-0238">DNA-binding</keyword>
<keyword id="KW-0479">Metal-binding</keyword>
<keyword id="KW-0539">Nucleus</keyword>
<keyword id="KW-0677">Repeat</keyword>
<keyword id="KW-0678">Repressor</keyword>
<keyword id="KW-0804">Transcription</keyword>
<keyword id="KW-0805">Transcription regulation</keyword>
<keyword id="KW-0862">Zinc</keyword>
<keyword id="KW-0863">Zinc-finger</keyword>
<feature type="chain" id="PRO_0000323762" description="Transcription factor YY2">
    <location>
        <begin position="1"/>
        <end position="376"/>
    </location>
</feature>
<feature type="zinc finger region" description="C2H2-type 1" evidence="2">
    <location>
        <begin position="258"/>
        <end position="282"/>
    </location>
</feature>
<feature type="zinc finger region" description="C2H2-type 2" evidence="2">
    <location>
        <begin position="287"/>
        <end position="309"/>
    </location>
</feature>
<feature type="zinc finger region" description="C2H2-type 3" evidence="2">
    <location>
        <begin position="315"/>
        <end position="339"/>
    </location>
</feature>
<feature type="zinc finger region" description="C2H2-type 4" evidence="2">
    <location>
        <begin position="345"/>
        <end position="369"/>
    </location>
</feature>
<feature type="region of interest" description="Mediates transcriptional activation" evidence="1">
    <location>
        <begin position="36"/>
        <end position="109"/>
    </location>
</feature>
<feature type="region of interest" description="Disordered" evidence="3">
    <location>
        <begin position="201"/>
        <end position="220"/>
    </location>
</feature>
<feature type="region of interest" description="Mediates transcriptional repression" evidence="1">
    <location>
        <begin position="241"/>
        <end position="376"/>
    </location>
</feature>
<sequence length="376" mass="41792">MASDTEKLMCLTTENAEIPADFVELQPLDEIETVSLETNVSQTIEVYGDVGVDWAHGGHYHSPLIALQPLAGSNLSNGDHDQEMIIVQTREEVVDYQDSDNLLLGTEFESQMVLPVTEDDYLQPTTATFSGFMAAENGQDELSPYGGNLCGLTTIIEAGAEEGVNPDLGDKQWEQKQIQIDGLDGEFPFAMWEDNNLKEDPVAEEEAGESTPDYSEYMTGKKFPPEGIPGIDLSDPKQLAEFTSMKPKKPKGDFPRPVACSHKGCGKMFKDNSAMRKHLHIHGPRVHVCAECGKAFVESSKLKRHQLVHTGEKPYQCTFEGCGRRFSLDFNLRTHVRIHTGDKPFVCPFDACNKKFAQSTNLKSHILTHVKNKNDQ</sequence>
<reference key="1">
    <citation type="journal article" date="2006" name="Genomics">
        <title>Rapid evolution of a recently retroposed transcription factor YY2 in mammalian genomes.</title>
        <authorList>
            <person name="Luo C."/>
            <person name="Lu X."/>
            <person name="Stubbs L."/>
            <person name="Kim J."/>
        </authorList>
    </citation>
    <scope>NUCLEOTIDE SEQUENCE [GENOMIC DNA]</scope>
</reference>
<evidence type="ECO:0000250" key="1"/>
<evidence type="ECO:0000255" key="2">
    <source>
        <dbReference type="PROSITE-ProRule" id="PRU00042"/>
    </source>
</evidence>
<evidence type="ECO:0000256" key="3">
    <source>
        <dbReference type="SAM" id="MobiDB-lite"/>
    </source>
</evidence>
<evidence type="ECO:0000305" key="4"/>
<accession>Q2FAY8</accession>
<name>TYY2_RATRT</name>
<dbReference type="EMBL" id="DQ107161">
    <property type="protein sequence ID" value="AAZ38710.1"/>
    <property type="molecule type" value="Genomic_DNA"/>
</dbReference>
<dbReference type="RefSeq" id="XP_032745553.1">
    <property type="nucleotide sequence ID" value="XM_032889662.1"/>
</dbReference>
<dbReference type="SMR" id="Q2FAY8"/>
<dbReference type="GeneID" id="116888388"/>
<dbReference type="GO" id="GO:0000785">
    <property type="term" value="C:chromatin"/>
    <property type="evidence" value="ECO:0007669"/>
    <property type="project" value="TreeGrafter"/>
</dbReference>
<dbReference type="GO" id="GO:0031519">
    <property type="term" value="C:PcG protein complex"/>
    <property type="evidence" value="ECO:0007669"/>
    <property type="project" value="TreeGrafter"/>
</dbReference>
<dbReference type="GO" id="GO:0005667">
    <property type="term" value="C:transcription regulator complex"/>
    <property type="evidence" value="ECO:0007669"/>
    <property type="project" value="TreeGrafter"/>
</dbReference>
<dbReference type="GO" id="GO:0000981">
    <property type="term" value="F:DNA-binding transcription factor activity, RNA polymerase II-specific"/>
    <property type="evidence" value="ECO:0007669"/>
    <property type="project" value="TreeGrafter"/>
</dbReference>
<dbReference type="GO" id="GO:0000978">
    <property type="term" value="F:RNA polymerase II cis-regulatory region sequence-specific DNA binding"/>
    <property type="evidence" value="ECO:0007669"/>
    <property type="project" value="TreeGrafter"/>
</dbReference>
<dbReference type="GO" id="GO:0008270">
    <property type="term" value="F:zinc ion binding"/>
    <property type="evidence" value="ECO:0007669"/>
    <property type="project" value="UniProtKB-KW"/>
</dbReference>
<dbReference type="FunFam" id="3.30.160.60:FF:000104">
    <property type="entry name" value="Transcriptional repressor protein YY1"/>
    <property type="match status" value="1"/>
</dbReference>
<dbReference type="FunFam" id="3.30.160.60:FF:000109">
    <property type="entry name" value="Transcriptional repressor protein YY1"/>
    <property type="match status" value="1"/>
</dbReference>
<dbReference type="FunFam" id="3.30.160.60:FF:000163">
    <property type="entry name" value="transcriptional repressor protein YY1"/>
    <property type="match status" value="1"/>
</dbReference>
<dbReference type="Gene3D" id="3.30.160.60">
    <property type="entry name" value="Classic Zinc Finger"/>
    <property type="match status" value="4"/>
</dbReference>
<dbReference type="InterPro" id="IPR017114">
    <property type="entry name" value="YY1-like"/>
</dbReference>
<dbReference type="InterPro" id="IPR036236">
    <property type="entry name" value="Znf_C2H2_sf"/>
</dbReference>
<dbReference type="InterPro" id="IPR013087">
    <property type="entry name" value="Znf_C2H2_type"/>
</dbReference>
<dbReference type="PANTHER" id="PTHR14003:SF11">
    <property type="entry name" value="TRANSCRIPTION FACTOR YY2"/>
    <property type="match status" value="1"/>
</dbReference>
<dbReference type="PANTHER" id="PTHR14003">
    <property type="entry name" value="TRANSCRIPTIONAL REPRESSOR PROTEIN YY"/>
    <property type="match status" value="1"/>
</dbReference>
<dbReference type="Pfam" id="PF00096">
    <property type="entry name" value="zf-C2H2"/>
    <property type="match status" value="4"/>
</dbReference>
<dbReference type="PIRSF" id="PIRSF037113">
    <property type="entry name" value="TF_Yin_yang"/>
    <property type="match status" value="1"/>
</dbReference>
<dbReference type="SMART" id="SM00355">
    <property type="entry name" value="ZnF_C2H2"/>
    <property type="match status" value="4"/>
</dbReference>
<dbReference type="SUPFAM" id="SSF57667">
    <property type="entry name" value="beta-beta-alpha zinc fingers"/>
    <property type="match status" value="3"/>
</dbReference>
<dbReference type="PROSITE" id="PS00028">
    <property type="entry name" value="ZINC_FINGER_C2H2_1"/>
    <property type="match status" value="4"/>
</dbReference>
<dbReference type="PROSITE" id="PS50157">
    <property type="entry name" value="ZINC_FINGER_C2H2_2"/>
    <property type="match status" value="4"/>
</dbReference>
<organism>
    <name type="scientific">Rattus rattus</name>
    <name type="common">Black rat</name>
    <dbReference type="NCBI Taxonomy" id="10117"/>
    <lineage>
        <taxon>Eukaryota</taxon>
        <taxon>Metazoa</taxon>
        <taxon>Chordata</taxon>
        <taxon>Craniata</taxon>
        <taxon>Vertebrata</taxon>
        <taxon>Euteleostomi</taxon>
        <taxon>Mammalia</taxon>
        <taxon>Eutheria</taxon>
        <taxon>Euarchontoglires</taxon>
        <taxon>Glires</taxon>
        <taxon>Rodentia</taxon>
        <taxon>Myomorpha</taxon>
        <taxon>Muroidea</taxon>
        <taxon>Muridae</taxon>
        <taxon>Murinae</taxon>
        <taxon>Rattus</taxon>
    </lineage>
</organism>
<gene>
    <name type="primary">Yy2</name>
</gene>
<comment type="function">
    <text evidence="1">Functions as a multifunctional transcription factor that may exhibit positive and negative control on a large number of genes. May antagonize YY1 and function in development and differentiation (By similarity).</text>
</comment>
<comment type="subcellular location">
    <subcellularLocation>
        <location evidence="4">Nucleus</location>
    </subcellularLocation>
</comment>
<comment type="miscellaneous">
    <text>The gene encoding this protein appears to have arisen by retrotransposition of the YY1 gene in placental mammals. It is encoded by a single exon found in an intron of the gene Mbtps2.</text>
</comment>
<comment type="similarity">
    <text evidence="4">Belongs to the YY transcription factor family.</text>
</comment>
<protein>
    <recommendedName>
        <fullName>Transcription factor YY2</fullName>
    </recommendedName>
    <alternativeName>
        <fullName>Yin and yang 2</fullName>
        <shortName>YY-2</shortName>
    </alternativeName>
</protein>